<sequence length="433" mass="47190">MTNKISSSDNLSNAVSATDDNASRTPNLTRRALVGGGVGLAAAGALASGLQAATLPAGASQVPTTPAGRPMPYAIRPMPEDRRFGYAIVGLGKYALNQILPGFAGCQHSRIEALVSGNAEKAKIVAAEYGVDPRKIYDYSNFDKIAKDPKIDAVYIILPNSLHAEFAIRAFKAGKHVMCEKPMATSVADCQRMIDAAKAANKKLMIGYRCHYDPMNRAAVKLIRENQLGKLGMVTTDNSDVMDQNDPAQQWRLRRELAGGGSLMDIGIYGLNGTRYLLGEEPIEVRAYTYSDPNDERFVEVEDRIIWQMRFRSGALSHGASSYSTTTTSRFSVQGDKAVLLMDPATGYYQNLISVQTPGHANQSMMPQFIMPANNQFSAQLDHLAEAVINNKPVRSPGEEGMQDVRLIQAIYEAARTGRPVNTDWGYVRQGGY</sequence>
<gene>
    <name type="primary">gfo</name>
    <name type="ordered locus">ZMO0689</name>
</gene>
<keyword id="KW-0002">3D-structure</keyword>
<keyword id="KW-0903">Direct protein sequencing</keyword>
<keyword id="KW-0521">NADP</keyword>
<keyword id="KW-0560">Oxidoreductase</keyword>
<keyword id="KW-0574">Periplasm</keyword>
<keyword id="KW-1185">Reference proteome</keyword>
<keyword id="KW-0732">Signal</keyword>
<organism>
    <name type="scientific">Zymomonas mobilis subsp. mobilis (strain ATCC 31821 / ZM4 / CP4)</name>
    <dbReference type="NCBI Taxonomy" id="264203"/>
    <lineage>
        <taxon>Bacteria</taxon>
        <taxon>Pseudomonadati</taxon>
        <taxon>Pseudomonadota</taxon>
        <taxon>Alphaproteobacteria</taxon>
        <taxon>Sphingomonadales</taxon>
        <taxon>Zymomonadaceae</taxon>
        <taxon>Zymomonas</taxon>
    </lineage>
</organism>
<feature type="signal peptide" description="Tat-type signal" evidence="1 3 4">
    <location>
        <begin position="1"/>
        <end position="52"/>
    </location>
</feature>
<feature type="chain" id="PRO_0000010851" description="Glucose--fructose oxidoreductase">
    <location>
        <begin position="53"/>
        <end position="433"/>
    </location>
</feature>
<feature type="region of interest" description="Disordered" evidence="2">
    <location>
        <begin position="1"/>
        <end position="24"/>
    </location>
</feature>
<feature type="sequence conflict" description="In Ref. 1 and 4." evidence="5" ref="1 4">
    <original>T</original>
    <variation>N</variation>
    <location>
        <position position="29"/>
    </location>
</feature>
<feature type="sequence conflict" description="In Ref. 1 and 4." evidence="5" ref="1 4">
    <original>A</original>
    <variation>R</variation>
    <location>
        <position position="43"/>
    </location>
</feature>
<feature type="sequence conflict" description="In Ref. 1; AAA27690 and 4; CAA51534." evidence="5" ref="1 4">
    <original>Q</original>
    <variation>L</variation>
    <location>
        <position position="61"/>
    </location>
</feature>
<feature type="sequence conflict" description="In Ref. 1; AAA27690." evidence="5" ref="1">
    <original>IEALVSGNA</original>
    <variation>MKLWSAVT</variation>
    <location>
        <begin position="111"/>
        <end position="119"/>
    </location>
</feature>
<feature type="sequence conflict" description="In Ref. 1; AAA27690." evidence="5" ref="1">
    <original>A</original>
    <variation>S</variation>
    <location>
        <position position="170"/>
    </location>
</feature>
<feature type="sequence conflict" description="In Ref. 1; AAA27690." evidence="5" ref="1">
    <original>PAQQWRLRRELA</original>
    <variation>LHSSGVCVVNS</variation>
    <location>
        <begin position="247"/>
        <end position="258"/>
    </location>
</feature>
<feature type="sequence conflict" description="In Ref. 1; AAA27690." evidence="5" ref="1">
    <original>P</original>
    <variation>A</variation>
    <location>
        <position position="420"/>
    </location>
</feature>
<feature type="sequence conflict" description="In Ref. 1; AAA27690." evidence="5" ref="1">
    <original>GGY</original>
    <variation>VVIDSDLTYLG</variation>
    <location>
        <begin position="431"/>
        <end position="433"/>
    </location>
</feature>
<feature type="helix" evidence="7">
    <location>
        <begin position="57"/>
        <end position="60"/>
    </location>
</feature>
<feature type="strand" evidence="7">
    <location>
        <begin position="64"/>
        <end position="66"/>
    </location>
</feature>
<feature type="strand" evidence="7">
    <location>
        <begin position="84"/>
        <end position="89"/>
    </location>
</feature>
<feature type="helix" evidence="7">
    <location>
        <begin position="93"/>
        <end position="97"/>
    </location>
</feature>
<feature type="helix" evidence="7">
    <location>
        <begin position="99"/>
        <end position="102"/>
    </location>
</feature>
<feature type="turn" evidence="7">
    <location>
        <begin position="103"/>
        <end position="105"/>
    </location>
</feature>
<feature type="strand" evidence="7">
    <location>
        <begin position="107"/>
        <end position="115"/>
    </location>
</feature>
<feature type="helix" evidence="7">
    <location>
        <begin position="119"/>
        <end position="128"/>
    </location>
</feature>
<feature type="helix" evidence="7">
    <location>
        <begin position="133"/>
        <end position="135"/>
    </location>
</feature>
<feature type="strand" evidence="7">
    <location>
        <begin position="139"/>
        <end position="141"/>
    </location>
</feature>
<feature type="helix" evidence="7">
    <location>
        <begin position="142"/>
        <end position="147"/>
    </location>
</feature>
<feature type="strand" evidence="7">
    <location>
        <begin position="153"/>
        <end position="156"/>
    </location>
</feature>
<feature type="helix" evidence="7">
    <location>
        <begin position="160"/>
        <end position="162"/>
    </location>
</feature>
<feature type="helix" evidence="7">
    <location>
        <begin position="163"/>
        <end position="172"/>
    </location>
</feature>
<feature type="strand" evidence="7">
    <location>
        <begin position="176"/>
        <end position="179"/>
    </location>
</feature>
<feature type="strand" evidence="6">
    <location>
        <begin position="181"/>
        <end position="183"/>
    </location>
</feature>
<feature type="helix" evidence="7">
    <location>
        <begin position="187"/>
        <end position="200"/>
    </location>
</feature>
<feature type="strand" evidence="7">
    <location>
        <begin position="204"/>
        <end position="206"/>
    </location>
</feature>
<feature type="helix" evidence="7">
    <location>
        <begin position="209"/>
        <end position="212"/>
    </location>
</feature>
<feature type="helix" evidence="7">
    <location>
        <begin position="214"/>
        <end position="224"/>
    </location>
</feature>
<feature type="turn" evidence="8">
    <location>
        <begin position="225"/>
        <end position="228"/>
    </location>
</feature>
<feature type="strand" evidence="7">
    <location>
        <begin position="230"/>
        <end position="239"/>
    </location>
</feature>
<feature type="helix" evidence="7">
    <location>
        <begin position="247"/>
        <end position="250"/>
    </location>
</feature>
<feature type="helix" evidence="7">
    <location>
        <begin position="251"/>
        <end position="253"/>
    </location>
</feature>
<feature type="helix" evidence="7">
    <location>
        <begin position="255"/>
        <end position="258"/>
    </location>
</feature>
<feature type="strand" evidence="7">
    <location>
        <begin position="259"/>
        <end position="261"/>
    </location>
</feature>
<feature type="helix" evidence="7">
    <location>
        <begin position="262"/>
        <end position="265"/>
    </location>
</feature>
<feature type="helix" evidence="7">
    <location>
        <begin position="267"/>
        <end position="278"/>
    </location>
</feature>
<feature type="strand" evidence="7">
    <location>
        <begin position="282"/>
        <end position="290"/>
    </location>
</feature>
<feature type="helix" evidence="7">
    <location>
        <begin position="296"/>
        <end position="298"/>
    </location>
</feature>
<feature type="strand" evidence="7">
    <location>
        <begin position="299"/>
        <end position="301"/>
    </location>
</feature>
<feature type="strand" evidence="7">
    <location>
        <begin position="303"/>
        <end position="311"/>
    </location>
</feature>
<feature type="strand" evidence="7">
    <location>
        <begin position="316"/>
        <end position="325"/>
    </location>
</feature>
<feature type="strand" evidence="7">
    <location>
        <begin position="328"/>
        <end position="337"/>
    </location>
</feature>
<feature type="strand" evidence="7">
    <location>
        <begin position="339"/>
        <end position="346"/>
    </location>
</feature>
<feature type="strand" evidence="7">
    <location>
        <begin position="353"/>
        <end position="357"/>
    </location>
</feature>
<feature type="strand" evidence="7">
    <location>
        <begin position="360"/>
        <end position="364"/>
    </location>
</feature>
<feature type="helix" evidence="7">
    <location>
        <begin position="376"/>
        <end position="389"/>
    </location>
</feature>
<feature type="strand" evidence="7">
    <location>
        <begin position="395"/>
        <end position="397"/>
    </location>
</feature>
<feature type="helix" evidence="7">
    <location>
        <begin position="398"/>
        <end position="417"/>
    </location>
</feature>
<accession>Q07982</accession>
<accession>P75002</accession>
<accession>Q5NPP7</accession>
<protein>
    <recommendedName>
        <fullName>Glucose--fructose oxidoreductase</fullName>
        <shortName>GFOR</shortName>
        <ecNumber>1.1.99.28</ecNumber>
    </recommendedName>
</protein>
<dbReference type="EC" id="1.1.99.28"/>
<dbReference type="EMBL" id="M97379">
    <property type="protein sequence ID" value="AAA27690.1"/>
    <property type="molecule type" value="Genomic_DNA"/>
</dbReference>
<dbReference type="EMBL" id="Z80356">
    <property type="protein sequence ID" value="CAB02496.1"/>
    <property type="molecule type" value="Genomic_DNA"/>
</dbReference>
<dbReference type="EMBL" id="AE008692">
    <property type="protein sequence ID" value="AAV89313.1"/>
    <property type="molecule type" value="Genomic_DNA"/>
</dbReference>
<dbReference type="EMBL" id="X73088">
    <property type="protein sequence ID" value="CAA51534.1"/>
    <property type="molecule type" value="Genomic_DNA"/>
</dbReference>
<dbReference type="PIR" id="A42289">
    <property type="entry name" value="A42289"/>
</dbReference>
<dbReference type="RefSeq" id="WP_011240581.1">
    <property type="nucleotide sequence ID" value="NZ_CP035711.1"/>
</dbReference>
<dbReference type="PDB" id="1EVJ">
    <property type="method" value="X-ray"/>
    <property type="resolution" value="2.70 A"/>
    <property type="chains" value="A/B/C/D=82-433"/>
</dbReference>
<dbReference type="PDB" id="1H6A">
    <property type="method" value="X-ray"/>
    <property type="resolution" value="2.50 A"/>
    <property type="chains" value="A/B=1-433"/>
</dbReference>
<dbReference type="PDB" id="1H6B">
    <property type="method" value="X-ray"/>
    <property type="resolution" value="2.60 A"/>
    <property type="chains" value="A/B=1-433"/>
</dbReference>
<dbReference type="PDB" id="1H6C">
    <property type="method" value="X-ray"/>
    <property type="resolution" value="2.20 A"/>
    <property type="chains" value="A/B=1-433"/>
</dbReference>
<dbReference type="PDB" id="1H6D">
    <property type="method" value="X-ray"/>
    <property type="resolution" value="2.05 A"/>
    <property type="chains" value="A/B/C/D/E/F/G/H/I/J/K/L=1-433"/>
</dbReference>
<dbReference type="PDB" id="1OFG">
    <property type="method" value="X-ray"/>
    <property type="resolution" value="2.70 A"/>
    <property type="chains" value="A/B/C/D/E/F=53-433"/>
</dbReference>
<dbReference type="PDB" id="1RYD">
    <property type="method" value="X-ray"/>
    <property type="resolution" value="2.20 A"/>
    <property type="chains" value="A/B=53-433"/>
</dbReference>
<dbReference type="PDB" id="1RYE">
    <property type="method" value="X-ray"/>
    <property type="resolution" value="2.30 A"/>
    <property type="chains" value="A/B/C/D=53-433"/>
</dbReference>
<dbReference type="PDBsum" id="1EVJ"/>
<dbReference type="PDBsum" id="1H6A"/>
<dbReference type="PDBsum" id="1H6B"/>
<dbReference type="PDBsum" id="1H6C"/>
<dbReference type="PDBsum" id="1H6D"/>
<dbReference type="PDBsum" id="1OFG"/>
<dbReference type="PDBsum" id="1RYD"/>
<dbReference type="PDBsum" id="1RYE"/>
<dbReference type="SMR" id="Q07982"/>
<dbReference type="STRING" id="264203.ZMO0689"/>
<dbReference type="DrugBank" id="DB02379">
    <property type="generic name" value="Beta-D-Glucose"/>
</dbReference>
<dbReference type="DrugBank" id="DB03345">
    <property type="generic name" value="Mercaptoethanol"/>
</dbReference>
<dbReference type="DrugBank" id="DB02338">
    <property type="generic name" value="NADPH"/>
</dbReference>
<dbReference type="KEGG" id="ag:AAA27690"/>
<dbReference type="KEGG" id="zmo:ZMO0689"/>
<dbReference type="eggNOG" id="COG0673">
    <property type="taxonomic scope" value="Bacteria"/>
</dbReference>
<dbReference type="HOGENOM" id="CLU_023194_5_1_5"/>
<dbReference type="BioCyc" id="MetaCyc:MONOMER-13277"/>
<dbReference type="BRENDA" id="1.1.99.28">
    <property type="organism ID" value="6765"/>
</dbReference>
<dbReference type="UniPathway" id="UPA00815">
    <property type="reaction ID" value="UER00784"/>
</dbReference>
<dbReference type="EvolutionaryTrace" id="Q07982"/>
<dbReference type="Proteomes" id="UP000001173">
    <property type="component" value="Chromosome"/>
</dbReference>
<dbReference type="GO" id="GO:0042597">
    <property type="term" value="C:periplasmic space"/>
    <property type="evidence" value="ECO:0007669"/>
    <property type="project" value="UniProtKB-SubCell"/>
</dbReference>
<dbReference type="GO" id="GO:0047061">
    <property type="term" value="F:glucose-fructose oxidoreductase activity"/>
    <property type="evidence" value="ECO:0007669"/>
    <property type="project" value="UniProtKB-EC"/>
</dbReference>
<dbReference type="GO" id="GO:0000166">
    <property type="term" value="F:nucleotide binding"/>
    <property type="evidence" value="ECO:0007669"/>
    <property type="project" value="InterPro"/>
</dbReference>
<dbReference type="GO" id="GO:0006061">
    <property type="term" value="P:sorbitol biosynthetic process"/>
    <property type="evidence" value="ECO:0007669"/>
    <property type="project" value="UniProtKB-UniPathway"/>
</dbReference>
<dbReference type="Gene3D" id="3.30.360.10">
    <property type="entry name" value="Dihydrodipicolinate Reductase, domain 2"/>
    <property type="match status" value="1"/>
</dbReference>
<dbReference type="Gene3D" id="3.40.50.720">
    <property type="entry name" value="NAD(P)-binding Rossmann-like Domain"/>
    <property type="match status" value="1"/>
</dbReference>
<dbReference type="InterPro" id="IPR004104">
    <property type="entry name" value="Gfo/Idh/MocA-like_OxRdtase_C"/>
</dbReference>
<dbReference type="InterPro" id="IPR000683">
    <property type="entry name" value="Gfo/Idh/MocA-like_OxRdtase_N"/>
</dbReference>
<dbReference type="InterPro" id="IPR052515">
    <property type="entry name" value="Gfo/Idh/MocA_Oxidoreductase"/>
</dbReference>
<dbReference type="InterPro" id="IPR008354">
    <property type="entry name" value="Glc-Fru_OxRdtase_bac"/>
</dbReference>
<dbReference type="InterPro" id="IPR036291">
    <property type="entry name" value="NAD(P)-bd_dom_sf"/>
</dbReference>
<dbReference type="InterPro" id="IPR006311">
    <property type="entry name" value="TAT_signal"/>
</dbReference>
<dbReference type="PANTHER" id="PTHR43249:SF1">
    <property type="entry name" value="D-GLUCOSIDE 3-DEHYDROGENASE"/>
    <property type="match status" value="1"/>
</dbReference>
<dbReference type="PANTHER" id="PTHR43249">
    <property type="entry name" value="UDP-N-ACETYL-2-AMINO-2-DEOXY-D-GLUCURONATE OXIDASE"/>
    <property type="match status" value="1"/>
</dbReference>
<dbReference type="Pfam" id="PF01408">
    <property type="entry name" value="GFO_IDH_MocA"/>
    <property type="match status" value="1"/>
</dbReference>
<dbReference type="Pfam" id="PF02894">
    <property type="entry name" value="GFO_IDH_MocA_C"/>
    <property type="match status" value="1"/>
</dbReference>
<dbReference type="PRINTS" id="PR01775">
    <property type="entry name" value="GLFROXRDTASE"/>
</dbReference>
<dbReference type="SUPFAM" id="SSF55347">
    <property type="entry name" value="Glyceraldehyde-3-phosphate dehydrogenase-like, C-terminal domain"/>
    <property type="match status" value="1"/>
</dbReference>
<dbReference type="SUPFAM" id="SSF51735">
    <property type="entry name" value="NAD(P)-binding Rossmann-fold domains"/>
    <property type="match status" value="1"/>
</dbReference>
<dbReference type="PROSITE" id="PS51318">
    <property type="entry name" value="TAT"/>
    <property type="match status" value="1"/>
</dbReference>
<reference key="1">
    <citation type="journal article" date="1992" name="J. Bacteriol.">
        <title>Cloning, sequence analysis, and expression of the structural gene encoding glucose-fructose oxidoreductase from Zymomonas mobilis.</title>
        <authorList>
            <person name="Kanagasundaram V."/>
            <person name="Scopes R.K."/>
        </authorList>
    </citation>
    <scope>NUCLEOTIDE SEQUENCE [GENOMIC DNA]</scope>
    <scope>PROTEIN SEQUENCE OF 53-87</scope>
    <source>
        <strain>ATCC 29191 / DSM 3580 / JCM 10190 / CECT 560 / NBRC 13756 / NCIMB 11199 / NRRL B-4490 / ZM6</strain>
    </source>
</reference>
<reference key="2">
    <citation type="journal article" date="1996" name="Arch. Microbiol.">
        <title>Export of the periplasmic NADP-containing glucose-fructose oxidoreductase of Zymomonas mobilis.</title>
        <authorList>
            <person name="Wiegert T."/>
            <person name="Sahm H."/>
            <person name="Sprenger G.A."/>
        </authorList>
    </citation>
    <scope>NUCLEOTIDE SEQUENCE [GENOMIC DNA]</scope>
    <source>
        <strain>ATCC 29191 / DSM 3580 / JCM 10190 / CECT 560 / NBRC 13756 / NCIMB 11199 / NRRL B-4490 / ZM6</strain>
    </source>
</reference>
<reference key="3">
    <citation type="journal article" date="2005" name="Nat. Biotechnol.">
        <title>The genome sequence of the ethanologenic bacterium Zymomonas mobilis ZM4.</title>
        <authorList>
            <person name="Seo J.-S."/>
            <person name="Chong H."/>
            <person name="Park H.S."/>
            <person name="Yoon K.-O."/>
            <person name="Jung C."/>
            <person name="Kim J.J."/>
            <person name="Hong J.H."/>
            <person name="Kim H."/>
            <person name="Kim J.-H."/>
            <person name="Kil J.-I."/>
            <person name="Park C.J."/>
            <person name="Oh H.-M."/>
            <person name="Lee J.-S."/>
            <person name="Jin S.-J."/>
            <person name="Um H.-W."/>
            <person name="Lee H.-J."/>
            <person name="Oh S.-J."/>
            <person name="Kim J.Y."/>
            <person name="Kang H.L."/>
            <person name="Lee S.Y."/>
            <person name="Lee K.J."/>
            <person name="Kang H.S."/>
        </authorList>
    </citation>
    <scope>NUCLEOTIDE SEQUENCE [LARGE SCALE GENOMIC DNA]</scope>
    <source>
        <strain>ATCC 31821 / ZM4 / CP4</strain>
    </source>
</reference>
<reference key="4">
    <citation type="journal article" date="1993" name="FEMS Microbiol. Lett.">
        <title>Glucose-fructose oxidoreductase, a periplasmic enzyme of Zymomonas mobilis, is active in its precursor form.</title>
        <authorList>
            <person name="Loos H."/>
            <person name="Sahm H."/>
            <person name="Sprenger G.A."/>
        </authorList>
    </citation>
    <scope>NUCLEOTIDE SEQUENCE [GENOMIC DNA] OF 1-71</scope>
    <scope>PROTEIN SEQUENCE OF 2-16 (PRECURSOR PROTEIN)</scope>
    <scope>PROTEIN SEQUENCE OF 53-71</scope>
    <source>
        <strain>ATCC 29191 / DSM 3580 / JCM 10190 / CECT 560 / NBRC 13756 / NCIMB 11199 / NRRL B-4490 / ZM6</strain>
        <strain>ATCC 31821 / ZM4 / CP4</strain>
    </source>
</reference>
<reference key="5">
    <citation type="journal article" date="1996" name="Structure">
        <title>The structure of glucose-fructose oxidoreductase from Zymomonas mobilis: an osmoprotective periplasmic enzyme containing non-dissociable NADP.</title>
        <authorList>
            <person name="Kingston R.L."/>
            <person name="Scopes R.K."/>
            <person name="Baker E.N."/>
        </authorList>
    </citation>
    <scope>X-RAY CRYSTALLOGRAPHY (2.7 ANGSTROMS)</scope>
</reference>
<proteinExistence type="evidence at protein level"/>
<comment type="catalytic activity">
    <reaction>
        <text>D-fructose + D-glucose = D-glucono-1,5-lactone + D-sorbitol</text>
        <dbReference type="Rhea" id="RHEA:20637"/>
        <dbReference type="ChEBI" id="CHEBI:4167"/>
        <dbReference type="ChEBI" id="CHEBI:16217"/>
        <dbReference type="ChEBI" id="CHEBI:17924"/>
        <dbReference type="ChEBI" id="CHEBI:37721"/>
        <dbReference type="EC" id="1.1.99.28"/>
    </reaction>
</comment>
<comment type="cofactor">
    <cofactor>
        <name>NADP(+)</name>
        <dbReference type="ChEBI" id="CHEBI:58349"/>
    </cofactor>
    <text>Binds 1 NADP(+) per subunit. The NADP(+) cannot dissociate.</text>
</comment>
<comment type="pathway">
    <text>Carbohydrate metabolism; D-sorbitol biosynthesis; D-sorbitol from D-fructose and D-glucose: step 1/1.</text>
</comment>
<comment type="subunit">
    <text>Homotetramer.</text>
</comment>
<comment type="subcellular location">
    <subcellularLocation>
        <location>Periplasm</location>
    </subcellularLocation>
</comment>
<comment type="PTM">
    <text>Predicted to be exported by the Tat system. The position of the signal peptide cleavage has been experimentally proven.</text>
</comment>
<comment type="similarity">
    <text evidence="5">Belongs to the Gfo/Idh/MocA family.</text>
</comment>
<evidence type="ECO:0000255" key="1">
    <source>
        <dbReference type="PROSITE-ProRule" id="PRU00648"/>
    </source>
</evidence>
<evidence type="ECO:0000256" key="2">
    <source>
        <dbReference type="SAM" id="MobiDB-lite"/>
    </source>
</evidence>
<evidence type="ECO:0000269" key="3">
    <source>
    </source>
</evidence>
<evidence type="ECO:0000269" key="4">
    <source>
    </source>
</evidence>
<evidence type="ECO:0000305" key="5"/>
<evidence type="ECO:0007829" key="6">
    <source>
        <dbReference type="PDB" id="1EVJ"/>
    </source>
</evidence>
<evidence type="ECO:0007829" key="7">
    <source>
        <dbReference type="PDB" id="1H6D"/>
    </source>
</evidence>
<evidence type="ECO:0007829" key="8">
    <source>
        <dbReference type="PDB" id="1RYD"/>
    </source>
</evidence>
<name>GFO_ZYMMO</name>